<evidence type="ECO:0000255" key="1">
    <source>
        <dbReference type="HAMAP-Rule" id="MF_00739"/>
    </source>
</evidence>
<accession>Q1B870</accession>
<gene>
    <name evidence="1" type="primary">ureA</name>
    <name type="ordered locus">Mmcs_2807</name>
</gene>
<protein>
    <recommendedName>
        <fullName evidence="1">Urease subunit gamma</fullName>
        <ecNumber evidence="1">3.5.1.5</ecNumber>
    </recommendedName>
    <alternativeName>
        <fullName evidence="1">Urea amidohydrolase subunit gamma</fullName>
    </alternativeName>
</protein>
<name>URE3_MYCSS</name>
<dbReference type="EC" id="3.5.1.5" evidence="1"/>
<dbReference type="EMBL" id="CP000384">
    <property type="protein sequence ID" value="ABG08914.1"/>
    <property type="molecule type" value="Genomic_DNA"/>
</dbReference>
<dbReference type="SMR" id="Q1B870"/>
<dbReference type="KEGG" id="mmc:Mmcs_2807"/>
<dbReference type="HOGENOM" id="CLU_145825_1_0_11"/>
<dbReference type="BioCyc" id="MSP164756:G1G6O-2861-MONOMER"/>
<dbReference type="UniPathway" id="UPA00258">
    <property type="reaction ID" value="UER00370"/>
</dbReference>
<dbReference type="GO" id="GO:0005737">
    <property type="term" value="C:cytoplasm"/>
    <property type="evidence" value="ECO:0007669"/>
    <property type="project" value="UniProtKB-SubCell"/>
</dbReference>
<dbReference type="GO" id="GO:0016151">
    <property type="term" value="F:nickel cation binding"/>
    <property type="evidence" value="ECO:0007669"/>
    <property type="project" value="InterPro"/>
</dbReference>
<dbReference type="GO" id="GO:0009039">
    <property type="term" value="F:urease activity"/>
    <property type="evidence" value="ECO:0007669"/>
    <property type="project" value="UniProtKB-UniRule"/>
</dbReference>
<dbReference type="GO" id="GO:0043419">
    <property type="term" value="P:urea catabolic process"/>
    <property type="evidence" value="ECO:0007669"/>
    <property type="project" value="UniProtKB-UniRule"/>
</dbReference>
<dbReference type="CDD" id="cd00390">
    <property type="entry name" value="Urease_gamma"/>
    <property type="match status" value="1"/>
</dbReference>
<dbReference type="Gene3D" id="3.30.280.10">
    <property type="entry name" value="Urease, gamma-like subunit"/>
    <property type="match status" value="1"/>
</dbReference>
<dbReference type="HAMAP" id="MF_00739">
    <property type="entry name" value="Urease_gamma"/>
    <property type="match status" value="1"/>
</dbReference>
<dbReference type="InterPro" id="IPR012010">
    <property type="entry name" value="Urease_gamma"/>
</dbReference>
<dbReference type="InterPro" id="IPR002026">
    <property type="entry name" value="Urease_gamma/gamma-beta_su"/>
</dbReference>
<dbReference type="InterPro" id="IPR036463">
    <property type="entry name" value="Urease_gamma_sf"/>
</dbReference>
<dbReference type="InterPro" id="IPR050069">
    <property type="entry name" value="Urease_subunit"/>
</dbReference>
<dbReference type="NCBIfam" id="NF009712">
    <property type="entry name" value="PRK13241.1"/>
    <property type="match status" value="1"/>
</dbReference>
<dbReference type="NCBIfam" id="TIGR00193">
    <property type="entry name" value="urease_gam"/>
    <property type="match status" value="1"/>
</dbReference>
<dbReference type="PANTHER" id="PTHR33569">
    <property type="entry name" value="UREASE"/>
    <property type="match status" value="1"/>
</dbReference>
<dbReference type="PANTHER" id="PTHR33569:SF1">
    <property type="entry name" value="UREASE"/>
    <property type="match status" value="1"/>
</dbReference>
<dbReference type="Pfam" id="PF00547">
    <property type="entry name" value="Urease_gamma"/>
    <property type="match status" value="1"/>
</dbReference>
<dbReference type="PIRSF" id="PIRSF001223">
    <property type="entry name" value="Urease_gamma"/>
    <property type="match status" value="1"/>
</dbReference>
<dbReference type="SUPFAM" id="SSF54111">
    <property type="entry name" value="Urease, gamma-subunit"/>
    <property type="match status" value="1"/>
</dbReference>
<proteinExistence type="inferred from homology"/>
<sequence length="100" mass="11179">MRLTPHEQDRLLISYAADLARRRRARGLRLNHPEAVAVITDHLLEGARDGRTVAELMVSGRDVLGRDDVMEGVPEMLHDVQVEATFPDGTKLVTVHHPIP</sequence>
<reference key="1">
    <citation type="submission" date="2006-06" db="EMBL/GenBank/DDBJ databases">
        <title>Complete sequence of chromosome of Mycobacterium sp. MCS.</title>
        <authorList>
            <consortium name="US DOE Joint Genome Institute"/>
            <person name="Copeland A."/>
            <person name="Lucas S."/>
            <person name="Lapidus A."/>
            <person name="Barry K."/>
            <person name="Detter J.C."/>
            <person name="Glavina del Rio T."/>
            <person name="Hammon N."/>
            <person name="Israni S."/>
            <person name="Dalin E."/>
            <person name="Tice H."/>
            <person name="Pitluck S."/>
            <person name="Martinez M."/>
            <person name="Schmutz J."/>
            <person name="Larimer F."/>
            <person name="Land M."/>
            <person name="Hauser L."/>
            <person name="Kyrpides N."/>
            <person name="Kim E."/>
            <person name="Miller C.D."/>
            <person name="Hughes J.E."/>
            <person name="Anderson A.J."/>
            <person name="Sims R.C."/>
            <person name="Richardson P."/>
        </authorList>
    </citation>
    <scope>NUCLEOTIDE SEQUENCE [LARGE SCALE GENOMIC DNA]</scope>
    <source>
        <strain>MCS</strain>
    </source>
</reference>
<comment type="catalytic activity">
    <reaction evidence="1">
        <text>urea + 2 H2O + H(+) = hydrogencarbonate + 2 NH4(+)</text>
        <dbReference type="Rhea" id="RHEA:20557"/>
        <dbReference type="ChEBI" id="CHEBI:15377"/>
        <dbReference type="ChEBI" id="CHEBI:15378"/>
        <dbReference type="ChEBI" id="CHEBI:16199"/>
        <dbReference type="ChEBI" id="CHEBI:17544"/>
        <dbReference type="ChEBI" id="CHEBI:28938"/>
        <dbReference type="EC" id="3.5.1.5"/>
    </reaction>
</comment>
<comment type="pathway">
    <text evidence="1">Nitrogen metabolism; urea degradation; CO(2) and NH(3) from urea (urease route): step 1/1.</text>
</comment>
<comment type="subunit">
    <text evidence="1">Heterotrimer of UreA (gamma), UreB (beta) and UreC (alpha) subunits. Three heterotrimers associate to form the active enzyme.</text>
</comment>
<comment type="subcellular location">
    <subcellularLocation>
        <location evidence="1">Cytoplasm</location>
    </subcellularLocation>
</comment>
<comment type="similarity">
    <text evidence="1">Belongs to the urease gamma subunit family.</text>
</comment>
<keyword id="KW-0963">Cytoplasm</keyword>
<keyword id="KW-0378">Hydrolase</keyword>
<feature type="chain" id="PRO_1000046341" description="Urease subunit gamma">
    <location>
        <begin position="1"/>
        <end position="100"/>
    </location>
</feature>
<organism>
    <name type="scientific">Mycobacterium sp. (strain MCS)</name>
    <dbReference type="NCBI Taxonomy" id="164756"/>
    <lineage>
        <taxon>Bacteria</taxon>
        <taxon>Bacillati</taxon>
        <taxon>Actinomycetota</taxon>
        <taxon>Actinomycetes</taxon>
        <taxon>Mycobacteriales</taxon>
        <taxon>Mycobacteriaceae</taxon>
        <taxon>Mycobacterium</taxon>
    </lineage>
</organism>